<protein>
    <recommendedName>
        <fullName>FMRFamide-16</fullName>
    </recommendedName>
    <alternativeName>
        <fullName evidence="3">SabFMRFamide-16</fullName>
    </alternativeName>
</protein>
<keyword id="KW-0027">Amidation</keyword>
<keyword id="KW-0903">Direct protein sequencing</keyword>
<keyword id="KW-0527">Neuropeptide</keyword>
<keyword id="KW-0964">Secreted</keyword>
<name>FAR16_SARBU</name>
<evidence type="ECO:0000255" key="1"/>
<evidence type="ECO:0000269" key="2">
    <source>
    </source>
</evidence>
<evidence type="ECO:0000303" key="3">
    <source>
    </source>
</evidence>
<evidence type="ECO:0000305" key="4"/>
<organism>
    <name type="scientific">Sarcophaga bullata</name>
    <name type="common">Grey flesh fly</name>
    <name type="synonym">Neobellieria bullata</name>
    <dbReference type="NCBI Taxonomy" id="7385"/>
    <lineage>
        <taxon>Eukaryota</taxon>
        <taxon>Metazoa</taxon>
        <taxon>Ecdysozoa</taxon>
        <taxon>Arthropoda</taxon>
        <taxon>Hexapoda</taxon>
        <taxon>Insecta</taxon>
        <taxon>Pterygota</taxon>
        <taxon>Neoptera</taxon>
        <taxon>Endopterygota</taxon>
        <taxon>Diptera</taxon>
        <taxon>Brachycera</taxon>
        <taxon>Muscomorpha</taxon>
        <taxon>Oestroidea</taxon>
        <taxon>Sarcophagidae</taxon>
        <taxon>Sarcophaga</taxon>
        <taxon>Neobellieria</taxon>
    </lineage>
</organism>
<dbReference type="GO" id="GO:0005576">
    <property type="term" value="C:extracellular region"/>
    <property type="evidence" value="ECO:0007669"/>
    <property type="project" value="UniProtKB-SubCell"/>
</dbReference>
<dbReference type="GO" id="GO:0007218">
    <property type="term" value="P:neuropeptide signaling pathway"/>
    <property type="evidence" value="ECO:0007669"/>
    <property type="project" value="UniProtKB-KW"/>
</dbReference>
<proteinExistence type="evidence at protein level"/>
<sequence>AAAGDNFMRF</sequence>
<comment type="subcellular location">
    <subcellularLocation>
        <location evidence="4">Secreted</location>
    </subcellularLocation>
</comment>
<comment type="mass spectrometry"/>
<comment type="similarity">
    <text evidence="1">Belongs to the FARP (FMRFamide related peptide) family.</text>
</comment>
<feature type="peptide" id="PRO_0000371775" description="FMRFamide-16">
    <location>
        <begin position="1"/>
        <end position="10"/>
    </location>
</feature>
<feature type="modified residue" description="Phenylalanine amide" evidence="2">
    <location>
        <position position="10"/>
    </location>
</feature>
<reference evidence="4" key="1">
    <citation type="journal article" date="2009" name="Gen. Comp. Endocrinol.">
        <title>Extended FMRFamides in dipteran insects: conservative expression in the neuroendocrine system is accompanied by rapid sequence evolution.</title>
        <authorList>
            <person name="Rahman M.M."/>
            <person name="Fromm B."/>
            <person name="Neupert S."/>
            <person name="Kreusch S."/>
            <person name="Predel R."/>
        </authorList>
    </citation>
    <scope>PROTEIN SEQUENCE</scope>
    <scope>MASS SPECTROMETRY</scope>
    <scope>AMIDATION AT PHE-10</scope>
    <source>
        <tissue evidence="2">Dorsal ganglionic sheath</tissue>
    </source>
</reference>
<accession>P85471</accession>